<proteinExistence type="evidence at protein level"/>
<keyword id="KW-0007">Acetylation</keyword>
<keyword id="KW-0025">Alternative splicing</keyword>
<keyword id="KW-0131">Cell cycle</keyword>
<keyword id="KW-0132">Cell division</keyword>
<keyword id="KW-0137">Centromere</keyword>
<keyword id="KW-0158">Chromosome</keyword>
<keyword id="KW-0175">Coiled coil</keyword>
<keyword id="KW-0963">Cytoplasm</keyword>
<keyword id="KW-0206">Cytoskeleton</keyword>
<keyword id="KW-0903">Direct protein sequencing</keyword>
<keyword id="KW-0995">Kinetochore</keyword>
<keyword id="KW-0498">Mitosis</keyword>
<keyword id="KW-1267">Proteomics identification</keyword>
<keyword id="KW-1185">Reference proteome</keyword>
<name>DCTN3_HUMAN</name>
<comment type="function">
    <text evidence="1 4">Part of the dynactin complex that activates the molecular motor dynein for ultra-processive transport along microtubules (By similarity). Together with dynein may be involved in spindle assembly and cytokinesis (PubMed:9722614).</text>
</comment>
<comment type="subunit">
    <text evidence="1">Subunit of dynactin, a multiprotein complex part of a tripartite complex with dynein and a adapter, such as BICDL1, BICD2 or HOOK3. The dynactin complex is built around ACTR1A/ACTB filament and consists of an actin-related filament composed of a shoulder domain, a pointed end and a barbed end. Its length is defined by its flexible shoulder domain. The soulder is composed of 2 DCTN1 subunits, 4 DCTN2 and 2 DCTN3. The 4 DCNT2 (via N-terminus) bind the ACTR1A filament and act as molecular rulers to determine the length. The pointed end is important for binding dynein-dynactin cargo adapters. Consists of 4 subunits: ACTR10, DCNT4, DCTN5 and DCTN6. The barbed end is composed of a CAPZA1:CAPZB heterodimers, which binds ACTR1A/ACTB filament and dynactin and stabilizes dynactin.</text>
</comment>
<comment type="interaction">
    <interactant intactId="EBI-12091947">
        <id>O75935-2</id>
    </interactant>
    <interactant intactId="EBI-930964">
        <id>P54253</id>
        <label>ATXN1</label>
    </interactant>
    <organismsDiffer>false</organismsDiffer>
    <experiments>6</experiments>
</comment>
<comment type="interaction">
    <interactant intactId="EBI-12091947">
        <id>O75935-2</id>
    </interactant>
    <interactant intactId="EBI-25840379">
        <id>Q14203-5</id>
        <label>DCTN1</label>
    </interactant>
    <organismsDiffer>false</organismsDiffer>
    <experiments>3</experiments>
</comment>
<comment type="interaction">
    <interactant intactId="EBI-12091947">
        <id>O75935-2</id>
    </interactant>
    <interactant intactId="EBI-948266">
        <id>O14901</id>
        <label>KLF11</label>
    </interactant>
    <organismsDiffer>false</organismsDiffer>
    <experiments>3</experiments>
</comment>
<comment type="interaction">
    <interactant intactId="EBI-12091947">
        <id>O75935-2</id>
    </interactant>
    <interactant intactId="EBI-1047093">
        <id>O76011</id>
        <label>KRT34</label>
    </interactant>
    <organismsDiffer>false</organismsDiffer>
    <experiments>3</experiments>
</comment>
<comment type="interaction">
    <interactant intactId="EBI-12091947">
        <id>O75935-2</id>
    </interactant>
    <interactant intactId="EBI-741048">
        <id>Q7Z3B4</id>
        <label>NUP54</label>
    </interactant>
    <organismsDiffer>false</organismsDiffer>
    <experiments>3</experiments>
</comment>
<comment type="interaction">
    <interactant intactId="EBI-12091947">
        <id>O75935-2</id>
    </interactant>
    <interactant intactId="EBI-2811583">
        <id>Q9BVL2</id>
        <label>NUP58</label>
    </interactant>
    <organismsDiffer>false</organismsDiffer>
    <experiments>3</experiments>
</comment>
<comment type="interaction">
    <interactant intactId="EBI-12091947">
        <id>O75935-2</id>
    </interactant>
    <interactant intactId="EBI-748265">
        <id>P78337</id>
        <label>PITX1</label>
    </interactant>
    <organismsDiffer>false</organismsDiffer>
    <experiments>3</experiments>
</comment>
<comment type="interaction">
    <interactant intactId="EBI-12091947">
        <id>O75935-2</id>
    </interactant>
    <interactant intactId="EBI-358993">
        <id>Q15645</id>
        <label>TRIP13</label>
    </interactant>
    <organismsDiffer>false</organismsDiffer>
    <experiments>3</experiments>
</comment>
<comment type="interaction">
    <interactant intactId="EBI-12091947">
        <id>O75935-2</id>
    </interactant>
    <interactant intactId="EBI-739895">
        <id>Q8N6Y0</id>
        <label>USHBP1</label>
    </interactant>
    <organismsDiffer>false</organismsDiffer>
    <experiments>3</experiments>
</comment>
<comment type="interaction">
    <interactant intactId="EBI-12091947">
        <id>O75935-2</id>
    </interactant>
    <interactant intactId="EBI-2559305">
        <id>A5D8V6</id>
        <label>VPS37C</label>
    </interactant>
    <organismsDiffer>false</organismsDiffer>
    <experiments>3</experiments>
</comment>
<comment type="subcellular location">
    <subcellularLocation>
        <location evidence="4">Cytoplasm</location>
    </subcellularLocation>
    <subcellularLocation>
        <location evidence="4">Cytoplasm</location>
        <location evidence="4">Cytoskeleton</location>
        <location evidence="4">Microtubule organizing center</location>
        <location evidence="4">Centrosome</location>
    </subcellularLocation>
    <subcellularLocation>
        <location evidence="4">Chromosome</location>
        <location evidence="4">Centromere</location>
        <location evidence="4">Kinetochore</location>
    </subcellularLocation>
    <subcellularLocation>
        <location evidence="4">Cytoplasm</location>
        <location evidence="4">Cytoskeleton</location>
        <location evidence="4">Spindle</location>
    </subcellularLocation>
    <subcellularLocation>
        <location evidence="4">Cleavage furrow</location>
    </subcellularLocation>
    <subcellularLocation>
        <location evidence="4">Midbody</location>
    </subcellularLocation>
    <text>Localizes to punctate cytoplasmic structures and to the centrosome during interphase, and to kinetochores and to spindle poles throughout mitosis. Colocalizes with dynein to the cleavage furrow and to midbody of dividing cells.</text>
</comment>
<comment type="alternative products">
    <event type="alternative splicing"/>
    <isoform>
        <id>O75935-1</id>
        <name evidence="4">1</name>
        <sequence type="displayed"/>
    </isoform>
    <isoform>
        <id>O75935-2</id>
        <name evidence="3">2</name>
        <sequence type="described" ref="VSP_051964"/>
    </isoform>
    <isoform>
        <id>O75935-3</id>
        <name evidence="7">3</name>
        <sequence type="described" ref="VSP_051961"/>
    </isoform>
</comment>
<comment type="tissue specificity">
    <text evidence="4">Ubiquitously expressed. Highly expressed in muscle and pancreas and detected at lower levels in brain.</text>
</comment>
<comment type="similarity">
    <text evidence="7">Belongs to the dynactin subunit 3 family.</text>
</comment>
<comment type="sequence caution" evidence="7">
    <conflict type="erroneous gene model prediction">
        <sequence resource="EMBL-CDS" id="CAI14178"/>
    </conflict>
</comment>
<organism>
    <name type="scientific">Homo sapiens</name>
    <name type="common">Human</name>
    <dbReference type="NCBI Taxonomy" id="9606"/>
    <lineage>
        <taxon>Eukaryota</taxon>
        <taxon>Metazoa</taxon>
        <taxon>Chordata</taxon>
        <taxon>Craniata</taxon>
        <taxon>Vertebrata</taxon>
        <taxon>Euteleostomi</taxon>
        <taxon>Mammalia</taxon>
        <taxon>Eutheria</taxon>
        <taxon>Euarchontoglires</taxon>
        <taxon>Primates</taxon>
        <taxon>Haplorrhini</taxon>
        <taxon>Catarrhini</taxon>
        <taxon>Hominidae</taxon>
        <taxon>Homo</taxon>
    </lineage>
</organism>
<reference evidence="7 8" key="1">
    <citation type="journal article" date="1998" name="J. Cell Biol.">
        <title>Characterization of the p22 subunit of dynactin reveals the localization of cytoplasmic dynein and dynactin to the midbody of dividing cells.</title>
        <authorList>
            <person name="Karki S."/>
            <person name="LaMonte B."/>
            <person name="Holzbaur E.L.F."/>
        </authorList>
    </citation>
    <scope>NUCLEOTIDE SEQUENCE [MRNA] (ISOFORM 1)</scope>
    <scope>PROTEIN SEQUENCE OF 20-28 AND 67-75</scope>
    <scope>SUBCELLULAR LOCATION</scope>
    <scope>TISSUE SPECIFICITY</scope>
    <source>
        <tissue evidence="4">Neuron</tissue>
    </source>
</reference>
<reference evidence="7 11" key="2">
    <citation type="submission" date="2004-06" db="EMBL/GenBank/DDBJ databases">
        <title>Cloning of human full open reading frames in Gateway(TM) system entry vector (pDONR201).</title>
        <authorList>
            <person name="Ebert L."/>
            <person name="Schick M."/>
            <person name="Neubert P."/>
            <person name="Schatten R."/>
            <person name="Henze S."/>
            <person name="Korn B."/>
        </authorList>
    </citation>
    <scope>NUCLEOTIDE SEQUENCE [LARGE SCALE MRNA] (ISOFORM 1)</scope>
</reference>
<reference key="3">
    <citation type="journal article" date="2004" name="Nat. Genet.">
        <title>Complete sequencing and characterization of 21,243 full-length human cDNAs.</title>
        <authorList>
            <person name="Ota T."/>
            <person name="Suzuki Y."/>
            <person name="Nishikawa T."/>
            <person name="Otsuki T."/>
            <person name="Sugiyama T."/>
            <person name="Irie R."/>
            <person name="Wakamatsu A."/>
            <person name="Hayashi K."/>
            <person name="Sato H."/>
            <person name="Nagai K."/>
            <person name="Kimura K."/>
            <person name="Makita H."/>
            <person name="Sekine M."/>
            <person name="Obayashi M."/>
            <person name="Nishi T."/>
            <person name="Shibahara T."/>
            <person name="Tanaka T."/>
            <person name="Ishii S."/>
            <person name="Yamamoto J."/>
            <person name="Saito K."/>
            <person name="Kawai Y."/>
            <person name="Isono Y."/>
            <person name="Nakamura Y."/>
            <person name="Nagahari K."/>
            <person name="Murakami K."/>
            <person name="Yasuda T."/>
            <person name="Iwayanagi T."/>
            <person name="Wagatsuma M."/>
            <person name="Shiratori A."/>
            <person name="Sudo H."/>
            <person name="Hosoiri T."/>
            <person name="Kaku Y."/>
            <person name="Kodaira H."/>
            <person name="Kondo H."/>
            <person name="Sugawara M."/>
            <person name="Takahashi M."/>
            <person name="Kanda K."/>
            <person name="Yokoi T."/>
            <person name="Furuya T."/>
            <person name="Kikkawa E."/>
            <person name="Omura Y."/>
            <person name="Abe K."/>
            <person name="Kamihara K."/>
            <person name="Katsuta N."/>
            <person name="Sato K."/>
            <person name="Tanikawa M."/>
            <person name="Yamazaki M."/>
            <person name="Ninomiya K."/>
            <person name="Ishibashi T."/>
            <person name="Yamashita H."/>
            <person name="Murakawa K."/>
            <person name="Fujimori K."/>
            <person name="Tanai H."/>
            <person name="Kimata M."/>
            <person name="Watanabe M."/>
            <person name="Hiraoka S."/>
            <person name="Chiba Y."/>
            <person name="Ishida S."/>
            <person name="Ono Y."/>
            <person name="Takiguchi S."/>
            <person name="Watanabe S."/>
            <person name="Yosida M."/>
            <person name="Hotuta T."/>
            <person name="Kusano J."/>
            <person name="Kanehori K."/>
            <person name="Takahashi-Fujii A."/>
            <person name="Hara H."/>
            <person name="Tanase T.-O."/>
            <person name="Nomura Y."/>
            <person name="Togiya S."/>
            <person name="Komai F."/>
            <person name="Hara R."/>
            <person name="Takeuchi K."/>
            <person name="Arita M."/>
            <person name="Imose N."/>
            <person name="Musashino K."/>
            <person name="Yuuki H."/>
            <person name="Oshima A."/>
            <person name="Sasaki N."/>
            <person name="Aotsuka S."/>
            <person name="Yoshikawa Y."/>
            <person name="Matsunawa H."/>
            <person name="Ichihara T."/>
            <person name="Shiohata N."/>
            <person name="Sano S."/>
            <person name="Moriya S."/>
            <person name="Momiyama H."/>
            <person name="Satoh N."/>
            <person name="Takami S."/>
            <person name="Terashima Y."/>
            <person name="Suzuki O."/>
            <person name="Nakagawa S."/>
            <person name="Senoh A."/>
            <person name="Mizoguchi H."/>
            <person name="Goto Y."/>
            <person name="Shimizu F."/>
            <person name="Wakebe H."/>
            <person name="Hishigaki H."/>
            <person name="Watanabe T."/>
            <person name="Sugiyama A."/>
            <person name="Takemoto M."/>
            <person name="Kawakami B."/>
            <person name="Yamazaki M."/>
            <person name="Watanabe K."/>
            <person name="Kumagai A."/>
            <person name="Itakura S."/>
            <person name="Fukuzumi Y."/>
            <person name="Fujimori Y."/>
            <person name="Komiyama M."/>
            <person name="Tashiro H."/>
            <person name="Tanigami A."/>
            <person name="Fujiwara T."/>
            <person name="Ono T."/>
            <person name="Yamada K."/>
            <person name="Fujii Y."/>
            <person name="Ozaki K."/>
            <person name="Hirao M."/>
            <person name="Ohmori Y."/>
            <person name="Kawabata A."/>
            <person name="Hikiji T."/>
            <person name="Kobatake N."/>
            <person name="Inagaki H."/>
            <person name="Ikema Y."/>
            <person name="Okamoto S."/>
            <person name="Okitani R."/>
            <person name="Kawakami T."/>
            <person name="Noguchi S."/>
            <person name="Itoh T."/>
            <person name="Shigeta K."/>
            <person name="Senba T."/>
            <person name="Matsumura K."/>
            <person name="Nakajima Y."/>
            <person name="Mizuno T."/>
            <person name="Morinaga M."/>
            <person name="Sasaki M."/>
            <person name="Togashi T."/>
            <person name="Oyama M."/>
            <person name="Hata H."/>
            <person name="Watanabe M."/>
            <person name="Komatsu T."/>
            <person name="Mizushima-Sugano J."/>
            <person name="Satoh T."/>
            <person name="Shirai Y."/>
            <person name="Takahashi Y."/>
            <person name="Nakagawa K."/>
            <person name="Okumura K."/>
            <person name="Nagase T."/>
            <person name="Nomura N."/>
            <person name="Kikuchi H."/>
            <person name="Masuho Y."/>
            <person name="Yamashita R."/>
            <person name="Nakai K."/>
            <person name="Yada T."/>
            <person name="Nakamura Y."/>
            <person name="Ohara O."/>
            <person name="Isogai T."/>
            <person name="Sugano S."/>
        </authorList>
    </citation>
    <scope>NUCLEOTIDE SEQUENCE [LARGE SCALE MRNA] (ISOFORM 1)</scope>
    <source>
        <tissue>Brain</tissue>
    </source>
</reference>
<reference evidence="7 12" key="4">
    <citation type="journal article" date="2004" name="Nature">
        <title>DNA sequence and analysis of human chromosome 9.</title>
        <authorList>
            <person name="Humphray S.J."/>
            <person name="Oliver K."/>
            <person name="Hunt A.R."/>
            <person name="Plumb R.W."/>
            <person name="Loveland J.E."/>
            <person name="Howe K.L."/>
            <person name="Andrews T.D."/>
            <person name="Searle S."/>
            <person name="Hunt S.E."/>
            <person name="Scott C.E."/>
            <person name="Jones M.C."/>
            <person name="Ainscough R."/>
            <person name="Almeida J.P."/>
            <person name="Ambrose K.D."/>
            <person name="Ashwell R.I.S."/>
            <person name="Babbage A.K."/>
            <person name="Babbage S."/>
            <person name="Bagguley C.L."/>
            <person name="Bailey J."/>
            <person name="Banerjee R."/>
            <person name="Barker D.J."/>
            <person name="Barlow K.F."/>
            <person name="Bates K."/>
            <person name="Beasley H."/>
            <person name="Beasley O."/>
            <person name="Bird C.P."/>
            <person name="Bray-Allen S."/>
            <person name="Brown A.J."/>
            <person name="Brown J.Y."/>
            <person name="Burford D."/>
            <person name="Burrill W."/>
            <person name="Burton J."/>
            <person name="Carder C."/>
            <person name="Carter N.P."/>
            <person name="Chapman J.C."/>
            <person name="Chen Y."/>
            <person name="Clarke G."/>
            <person name="Clark S.Y."/>
            <person name="Clee C.M."/>
            <person name="Clegg S."/>
            <person name="Collier R.E."/>
            <person name="Corby N."/>
            <person name="Crosier M."/>
            <person name="Cummings A.T."/>
            <person name="Davies J."/>
            <person name="Dhami P."/>
            <person name="Dunn M."/>
            <person name="Dutta I."/>
            <person name="Dyer L.W."/>
            <person name="Earthrowl M.E."/>
            <person name="Faulkner L."/>
            <person name="Fleming C.J."/>
            <person name="Frankish A."/>
            <person name="Frankland J.A."/>
            <person name="French L."/>
            <person name="Fricker D.G."/>
            <person name="Garner P."/>
            <person name="Garnett J."/>
            <person name="Ghori J."/>
            <person name="Gilbert J.G.R."/>
            <person name="Glison C."/>
            <person name="Grafham D.V."/>
            <person name="Gribble S."/>
            <person name="Griffiths C."/>
            <person name="Griffiths-Jones S."/>
            <person name="Grocock R."/>
            <person name="Guy J."/>
            <person name="Hall R.E."/>
            <person name="Hammond S."/>
            <person name="Harley J.L."/>
            <person name="Harrison E.S.I."/>
            <person name="Hart E.A."/>
            <person name="Heath P.D."/>
            <person name="Henderson C.D."/>
            <person name="Hopkins B.L."/>
            <person name="Howard P.J."/>
            <person name="Howden P.J."/>
            <person name="Huckle E."/>
            <person name="Johnson C."/>
            <person name="Johnson D."/>
            <person name="Joy A.A."/>
            <person name="Kay M."/>
            <person name="Keenan S."/>
            <person name="Kershaw J.K."/>
            <person name="Kimberley A.M."/>
            <person name="King A."/>
            <person name="Knights A."/>
            <person name="Laird G.K."/>
            <person name="Langford C."/>
            <person name="Lawlor S."/>
            <person name="Leongamornlert D.A."/>
            <person name="Leversha M."/>
            <person name="Lloyd C."/>
            <person name="Lloyd D.M."/>
            <person name="Lovell J."/>
            <person name="Martin S."/>
            <person name="Mashreghi-Mohammadi M."/>
            <person name="Matthews L."/>
            <person name="McLaren S."/>
            <person name="McLay K.E."/>
            <person name="McMurray A."/>
            <person name="Milne S."/>
            <person name="Nickerson T."/>
            <person name="Nisbett J."/>
            <person name="Nordsiek G."/>
            <person name="Pearce A.V."/>
            <person name="Peck A.I."/>
            <person name="Porter K.M."/>
            <person name="Pandian R."/>
            <person name="Pelan S."/>
            <person name="Phillimore B."/>
            <person name="Povey S."/>
            <person name="Ramsey Y."/>
            <person name="Rand V."/>
            <person name="Scharfe M."/>
            <person name="Sehra H.K."/>
            <person name="Shownkeen R."/>
            <person name="Sims S.K."/>
            <person name="Skuce C.D."/>
            <person name="Smith M."/>
            <person name="Steward C.A."/>
            <person name="Swarbreck D."/>
            <person name="Sycamore N."/>
            <person name="Tester J."/>
            <person name="Thorpe A."/>
            <person name="Tracey A."/>
            <person name="Tromans A."/>
            <person name="Thomas D.W."/>
            <person name="Wall M."/>
            <person name="Wallis J.M."/>
            <person name="West A.P."/>
            <person name="Whitehead S.L."/>
            <person name="Willey D.L."/>
            <person name="Williams S.A."/>
            <person name="Wilming L."/>
            <person name="Wray P.W."/>
            <person name="Young L."/>
            <person name="Ashurst J.L."/>
            <person name="Coulson A."/>
            <person name="Blocker H."/>
            <person name="Durbin R.M."/>
            <person name="Sulston J.E."/>
            <person name="Hubbard T."/>
            <person name="Jackson M.J."/>
            <person name="Bentley D.R."/>
            <person name="Beck S."/>
            <person name="Rogers J."/>
            <person name="Dunham I."/>
        </authorList>
    </citation>
    <scope>NUCLEOTIDE SEQUENCE [LARGE SCALE GENOMIC DNA]</scope>
</reference>
<reference evidence="7 11" key="5">
    <citation type="submission" date="2005-09" db="EMBL/GenBank/DDBJ databases">
        <authorList>
            <person name="Mural R.J."/>
            <person name="Istrail S."/>
            <person name="Sutton G.G."/>
            <person name="Florea L."/>
            <person name="Halpern A.L."/>
            <person name="Mobarry C.M."/>
            <person name="Lippert R."/>
            <person name="Walenz B."/>
            <person name="Shatkay H."/>
            <person name="Dew I."/>
            <person name="Miller J.R."/>
            <person name="Flanigan M.J."/>
            <person name="Edwards N.J."/>
            <person name="Bolanos R."/>
            <person name="Fasulo D."/>
            <person name="Halldorsson B.V."/>
            <person name="Hannenhalli S."/>
            <person name="Turner R."/>
            <person name="Yooseph S."/>
            <person name="Lu F."/>
            <person name="Nusskern D.R."/>
            <person name="Shue B.C."/>
            <person name="Zheng X.H."/>
            <person name="Zhong F."/>
            <person name="Delcher A.L."/>
            <person name="Huson D.H."/>
            <person name="Kravitz S.A."/>
            <person name="Mouchard L."/>
            <person name="Reinert K."/>
            <person name="Remington K.A."/>
            <person name="Clark A.G."/>
            <person name="Waterman M.S."/>
            <person name="Eichler E.E."/>
            <person name="Adams M.D."/>
            <person name="Hunkapiller M.W."/>
            <person name="Myers E.W."/>
            <person name="Venter J.C."/>
        </authorList>
    </citation>
    <scope>NUCLEOTIDE SEQUENCE [LARGE SCALE GENOMIC DNA]</scope>
</reference>
<reference evidence="7 10" key="6">
    <citation type="journal article" date="2004" name="Genome Res.">
        <title>The status, quality, and expansion of the NIH full-length cDNA project: the Mammalian Gene Collection (MGC).</title>
        <authorList>
            <consortium name="The MGC Project Team"/>
        </authorList>
    </citation>
    <scope>NUCLEOTIDE SEQUENCE [LARGE SCALE MRNA] (ISOFORMS 1 AND 2)</scope>
    <source>
        <tissue evidence="9">Lung</tissue>
    </source>
</reference>
<reference key="7">
    <citation type="journal article" date="2011" name="BMC Syst. Biol.">
        <title>Initial characterization of the human central proteome.</title>
        <authorList>
            <person name="Burkard T.R."/>
            <person name="Planyavsky M."/>
            <person name="Kaupe I."/>
            <person name="Breitwieser F.P."/>
            <person name="Buerckstuemmer T."/>
            <person name="Bennett K.L."/>
            <person name="Superti-Furga G."/>
            <person name="Colinge J."/>
        </authorList>
    </citation>
    <scope>IDENTIFICATION BY MASS SPECTROMETRY [LARGE SCALE ANALYSIS]</scope>
</reference>
<reference key="8">
    <citation type="journal article" date="2012" name="Proc. Natl. Acad. Sci. U.S.A.">
        <title>N-terminal acetylome analyses and functional insights of the N-terminal acetyltransferase NatB.</title>
        <authorList>
            <person name="Van Damme P."/>
            <person name="Lasa M."/>
            <person name="Polevoda B."/>
            <person name="Gazquez C."/>
            <person name="Elosegui-Artola A."/>
            <person name="Kim D.S."/>
            <person name="De Juan-Pardo E."/>
            <person name="Demeyer K."/>
            <person name="Hole K."/>
            <person name="Larrea E."/>
            <person name="Timmerman E."/>
            <person name="Prieto J."/>
            <person name="Arnesen T."/>
            <person name="Sherman F."/>
            <person name="Gevaert K."/>
            <person name="Aldabe R."/>
        </authorList>
    </citation>
    <scope>ACETYLATION [LARGE SCALE ANALYSIS] AT ALA-2</scope>
    <scope>CLEAVAGE OF INITIATOR METHIONINE [LARGE SCALE ANALYSIS]</scope>
    <scope>IDENTIFICATION BY MASS SPECTROMETRY [LARGE SCALE ANALYSIS]</scope>
</reference>
<dbReference type="EMBL" id="AF082513">
    <property type="protein sequence ID" value="AAC61280.1"/>
    <property type="molecule type" value="mRNA"/>
</dbReference>
<dbReference type="EMBL" id="CR541889">
    <property type="protein sequence ID" value="CAG46687.1"/>
    <property type="molecule type" value="mRNA"/>
</dbReference>
<dbReference type="EMBL" id="AK314730">
    <property type="protein sequence ID" value="BAG37272.1"/>
    <property type="molecule type" value="mRNA"/>
</dbReference>
<dbReference type="EMBL" id="AL160270">
    <property type="protein sequence ID" value="CAI13143.1"/>
    <property type="molecule type" value="Genomic_DNA"/>
</dbReference>
<dbReference type="EMBL" id="AL450283">
    <property type="protein sequence ID" value="CAI13143.1"/>
    <property type="status" value="JOINED"/>
    <property type="molecule type" value="Genomic_DNA"/>
</dbReference>
<dbReference type="EMBL" id="AL160270">
    <property type="protein sequence ID" value="CAI13145.1"/>
    <property type="molecule type" value="Genomic_DNA"/>
</dbReference>
<dbReference type="EMBL" id="AL450283">
    <property type="protein sequence ID" value="CAI13145.1"/>
    <property type="status" value="JOINED"/>
    <property type="molecule type" value="Genomic_DNA"/>
</dbReference>
<dbReference type="EMBL" id="AL450283">
    <property type="protein sequence ID" value="CAI14178.1"/>
    <property type="status" value="ALT_SEQ"/>
    <property type="molecule type" value="Genomic_DNA"/>
</dbReference>
<dbReference type="EMBL" id="AL450283">
    <property type="protein sequence ID" value="CAI14181.1"/>
    <property type="molecule type" value="Genomic_DNA"/>
</dbReference>
<dbReference type="EMBL" id="AL160270">
    <property type="protein sequence ID" value="CAI14181.1"/>
    <property type="status" value="JOINED"/>
    <property type="molecule type" value="Genomic_DNA"/>
</dbReference>
<dbReference type="EMBL" id="AL450283">
    <property type="protein sequence ID" value="CAI14182.1"/>
    <property type="molecule type" value="Genomic_DNA"/>
</dbReference>
<dbReference type="EMBL" id="AL160270">
    <property type="protein sequence ID" value="CAI14182.1"/>
    <property type="status" value="JOINED"/>
    <property type="molecule type" value="Genomic_DNA"/>
</dbReference>
<dbReference type="EMBL" id="CH471071">
    <property type="protein sequence ID" value="EAW58440.1"/>
    <property type="molecule type" value="Genomic_DNA"/>
</dbReference>
<dbReference type="EMBL" id="CH471071">
    <property type="protein sequence ID" value="EAW58441.1"/>
    <property type="molecule type" value="Genomic_DNA"/>
</dbReference>
<dbReference type="EMBL" id="BC000319">
    <property type="protein sequence ID" value="AAH00319.1"/>
    <property type="molecule type" value="mRNA"/>
</dbReference>
<dbReference type="EMBL" id="BC003004">
    <property type="protein sequence ID" value="AAH03004.1"/>
    <property type="molecule type" value="mRNA"/>
</dbReference>
<dbReference type="EMBL" id="BC107697">
    <property type="protein sequence ID" value="AAI07698.1"/>
    <property type="molecule type" value="mRNA"/>
</dbReference>
<dbReference type="CCDS" id="CCDS65028.1">
    <molecule id="O75935-3"/>
</dbReference>
<dbReference type="CCDS" id="CCDS6560.1">
    <molecule id="O75935-1"/>
</dbReference>
<dbReference type="CCDS" id="CCDS6561.1">
    <molecule id="O75935-2"/>
</dbReference>
<dbReference type="RefSeq" id="NP_001268354.1">
    <molecule id="O75935-3"/>
    <property type="nucleotide sequence ID" value="NM_001281425.2"/>
</dbReference>
<dbReference type="RefSeq" id="NP_001268355.1">
    <property type="nucleotide sequence ID" value="NM_001281426.1"/>
</dbReference>
<dbReference type="RefSeq" id="NP_009165.1">
    <molecule id="O75935-1"/>
    <property type="nucleotide sequence ID" value="NM_007234.5"/>
</dbReference>
<dbReference type="RefSeq" id="NP_077324.1">
    <molecule id="O75935-2"/>
    <property type="nucleotide sequence ID" value="NM_024348.4"/>
</dbReference>
<dbReference type="SMR" id="O75935"/>
<dbReference type="BioGRID" id="116418">
    <property type="interactions" value="155"/>
</dbReference>
<dbReference type="FunCoup" id="O75935">
    <property type="interactions" value="1327"/>
</dbReference>
<dbReference type="IntAct" id="O75935">
    <property type="interactions" value="115"/>
</dbReference>
<dbReference type="MINT" id="O75935"/>
<dbReference type="STRING" id="9606.ENSP00000259632"/>
<dbReference type="GlyGen" id="O75935">
    <property type="glycosylation" value="2 sites, 1 N-linked glycan (2 sites)"/>
</dbReference>
<dbReference type="iPTMnet" id="O75935"/>
<dbReference type="PhosphoSitePlus" id="O75935"/>
<dbReference type="BioMuta" id="DCTN3"/>
<dbReference type="jPOST" id="O75935"/>
<dbReference type="MassIVE" id="O75935"/>
<dbReference type="PaxDb" id="9606-ENSP00000259632"/>
<dbReference type="PeptideAtlas" id="O75935"/>
<dbReference type="ProteomicsDB" id="50298">
    <molecule id="O75935-1"/>
</dbReference>
<dbReference type="ProteomicsDB" id="50299">
    <molecule id="O75935-2"/>
</dbReference>
<dbReference type="ProteomicsDB" id="50300">
    <molecule id="O75935-3"/>
</dbReference>
<dbReference type="Pumba" id="O75935"/>
<dbReference type="TopDownProteomics" id="O75935-1">
    <molecule id="O75935-1"/>
</dbReference>
<dbReference type="TopDownProteomics" id="O75935-3">
    <molecule id="O75935-3"/>
</dbReference>
<dbReference type="Antibodypedia" id="25511">
    <property type="antibodies" value="197 antibodies from 29 providers"/>
</dbReference>
<dbReference type="DNASU" id="11258"/>
<dbReference type="Ensembl" id="ENST00000259632.12">
    <molecule id="O75935-1"/>
    <property type="protein sequence ID" value="ENSP00000259632.7"/>
    <property type="gene ID" value="ENSG00000137100.16"/>
</dbReference>
<dbReference type="Ensembl" id="ENST00000341694.6">
    <molecule id="O75935-2"/>
    <property type="protein sequence ID" value="ENSP00000343986.2"/>
    <property type="gene ID" value="ENSG00000137100.16"/>
</dbReference>
<dbReference type="Ensembl" id="ENST00000378916.8">
    <molecule id="O75935-3"/>
    <property type="protein sequence ID" value="ENSP00000368196.4"/>
    <property type="gene ID" value="ENSG00000137100.16"/>
</dbReference>
<dbReference type="GeneID" id="11258"/>
<dbReference type="KEGG" id="hsa:11258"/>
<dbReference type="MANE-Select" id="ENST00000259632.12">
    <property type="protein sequence ID" value="ENSP00000259632.7"/>
    <property type="RefSeq nucleotide sequence ID" value="NM_007234.5"/>
    <property type="RefSeq protein sequence ID" value="NP_009165.1"/>
</dbReference>
<dbReference type="UCSC" id="uc003zuw.3">
    <molecule id="O75935-1"/>
    <property type="organism name" value="human"/>
</dbReference>
<dbReference type="AGR" id="HGNC:2713"/>
<dbReference type="CTD" id="11258"/>
<dbReference type="DisGeNET" id="11258"/>
<dbReference type="GeneCards" id="DCTN3"/>
<dbReference type="HGNC" id="HGNC:2713">
    <property type="gene designation" value="DCTN3"/>
</dbReference>
<dbReference type="HPA" id="ENSG00000137100">
    <property type="expression patterns" value="Low tissue specificity"/>
</dbReference>
<dbReference type="MIM" id="607387">
    <property type="type" value="gene"/>
</dbReference>
<dbReference type="neXtProt" id="NX_O75935"/>
<dbReference type="OpenTargets" id="ENSG00000137100"/>
<dbReference type="PharmGKB" id="PA27182"/>
<dbReference type="VEuPathDB" id="HostDB:ENSG00000137100"/>
<dbReference type="eggNOG" id="ENOG502RYZ0">
    <property type="taxonomic scope" value="Eukaryota"/>
</dbReference>
<dbReference type="GeneTree" id="ENSGT00390000016210"/>
<dbReference type="InParanoid" id="O75935"/>
<dbReference type="OMA" id="IQQQEQC"/>
<dbReference type="OrthoDB" id="16729at2759"/>
<dbReference type="PAN-GO" id="O75935">
    <property type="GO annotations" value="2 GO annotations based on evolutionary models"/>
</dbReference>
<dbReference type="PhylomeDB" id="O75935"/>
<dbReference type="TreeFam" id="TF105248"/>
<dbReference type="PathwayCommons" id="O75935"/>
<dbReference type="Reactome" id="R-HSA-2132295">
    <property type="pathway name" value="MHC class II antigen presentation"/>
</dbReference>
<dbReference type="Reactome" id="R-HSA-2565942">
    <property type="pathway name" value="Regulation of PLK1 Activity at G2/M Transition"/>
</dbReference>
<dbReference type="Reactome" id="R-HSA-3371497">
    <property type="pathway name" value="HSP90 chaperone cycle for steroid hormone receptors (SHR) in the presence of ligand"/>
</dbReference>
<dbReference type="Reactome" id="R-HSA-380259">
    <property type="pathway name" value="Loss of Nlp from mitotic centrosomes"/>
</dbReference>
<dbReference type="Reactome" id="R-HSA-380270">
    <property type="pathway name" value="Recruitment of mitotic centrosome proteins and complexes"/>
</dbReference>
<dbReference type="Reactome" id="R-HSA-380284">
    <property type="pathway name" value="Loss of proteins required for interphase microtubule organization from the centrosome"/>
</dbReference>
<dbReference type="Reactome" id="R-HSA-380320">
    <property type="pathway name" value="Recruitment of NuMA to mitotic centrosomes"/>
</dbReference>
<dbReference type="Reactome" id="R-HSA-5620912">
    <property type="pathway name" value="Anchoring of the basal body to the plasma membrane"/>
</dbReference>
<dbReference type="Reactome" id="R-HSA-6807878">
    <property type="pathway name" value="COPI-mediated anterograde transport"/>
</dbReference>
<dbReference type="Reactome" id="R-HSA-6811436">
    <property type="pathway name" value="COPI-independent Golgi-to-ER retrograde traffic"/>
</dbReference>
<dbReference type="Reactome" id="R-HSA-8854518">
    <property type="pathway name" value="AURKA Activation by TPX2"/>
</dbReference>
<dbReference type="SignaLink" id="O75935"/>
<dbReference type="BioGRID-ORCS" id="11258">
    <property type="hits" value="692 hits in 1169 CRISPR screens"/>
</dbReference>
<dbReference type="CD-CODE" id="8C2F96ED">
    <property type="entry name" value="Centrosome"/>
</dbReference>
<dbReference type="CD-CODE" id="FB4E32DD">
    <property type="entry name" value="Presynaptic clusters and postsynaptic densities"/>
</dbReference>
<dbReference type="ChiTaRS" id="DCTN3">
    <property type="organism name" value="human"/>
</dbReference>
<dbReference type="GeneWiki" id="DCTN3"/>
<dbReference type="GenomeRNAi" id="11258"/>
<dbReference type="Pharos" id="O75935">
    <property type="development level" value="Tbio"/>
</dbReference>
<dbReference type="PRO" id="PR:O75935"/>
<dbReference type="Proteomes" id="UP000005640">
    <property type="component" value="Chromosome 9"/>
</dbReference>
<dbReference type="RNAct" id="O75935">
    <property type="molecule type" value="protein"/>
</dbReference>
<dbReference type="Bgee" id="ENSG00000137100">
    <property type="expression patterns" value="Expressed in cortical plate and 210 other cell types or tissues"/>
</dbReference>
<dbReference type="ExpressionAtlas" id="O75935">
    <property type="expression patterns" value="baseline and differential"/>
</dbReference>
<dbReference type="GO" id="GO:0005813">
    <property type="term" value="C:centrosome"/>
    <property type="evidence" value="ECO:0000314"/>
    <property type="project" value="UniProtKB"/>
</dbReference>
<dbReference type="GO" id="GO:0032154">
    <property type="term" value="C:cleavage furrow"/>
    <property type="evidence" value="ECO:0007669"/>
    <property type="project" value="UniProtKB-SubCell"/>
</dbReference>
<dbReference type="GO" id="GO:0005829">
    <property type="term" value="C:cytosol"/>
    <property type="evidence" value="ECO:0000314"/>
    <property type="project" value="HPA"/>
</dbReference>
<dbReference type="GO" id="GO:0005869">
    <property type="term" value="C:dynactin complex"/>
    <property type="evidence" value="ECO:0000353"/>
    <property type="project" value="UniProtKB"/>
</dbReference>
<dbReference type="GO" id="GO:0000776">
    <property type="term" value="C:kinetochore"/>
    <property type="evidence" value="ECO:0007669"/>
    <property type="project" value="UniProtKB-KW"/>
</dbReference>
<dbReference type="GO" id="GO:0030496">
    <property type="term" value="C:midbody"/>
    <property type="evidence" value="ECO:0007669"/>
    <property type="project" value="UniProtKB-SubCell"/>
</dbReference>
<dbReference type="GO" id="GO:0005730">
    <property type="term" value="C:nucleolus"/>
    <property type="evidence" value="ECO:0000314"/>
    <property type="project" value="HPA"/>
</dbReference>
<dbReference type="GO" id="GO:0048471">
    <property type="term" value="C:perinuclear region of cytoplasm"/>
    <property type="evidence" value="ECO:0000314"/>
    <property type="project" value="UniProtKB"/>
</dbReference>
<dbReference type="GO" id="GO:0005819">
    <property type="term" value="C:spindle"/>
    <property type="evidence" value="ECO:0007669"/>
    <property type="project" value="UniProtKB-SubCell"/>
</dbReference>
<dbReference type="GO" id="GO:0005198">
    <property type="term" value="F:structural molecule activity"/>
    <property type="evidence" value="ECO:0000304"/>
    <property type="project" value="ProtInc"/>
</dbReference>
<dbReference type="GO" id="GO:0061640">
    <property type="term" value="P:cytoskeleton-dependent cytokinesis"/>
    <property type="evidence" value="ECO:0000314"/>
    <property type="project" value="UniProtKB"/>
</dbReference>
<dbReference type="GO" id="GO:0007017">
    <property type="term" value="P:microtubule-based process"/>
    <property type="evidence" value="ECO:0007669"/>
    <property type="project" value="Ensembl"/>
</dbReference>
<dbReference type="GO" id="GO:0000278">
    <property type="term" value="P:mitotic cell cycle"/>
    <property type="evidence" value="ECO:0000304"/>
    <property type="project" value="ProtInc"/>
</dbReference>
<dbReference type="InterPro" id="IPR009991">
    <property type="entry name" value="DCTN3"/>
</dbReference>
<dbReference type="PANTHER" id="PTHR28360">
    <property type="entry name" value="DYNACTIN SUBUNIT 3"/>
    <property type="match status" value="1"/>
</dbReference>
<dbReference type="PANTHER" id="PTHR28360:SF1">
    <property type="entry name" value="DYNACTIN SUBUNIT 3"/>
    <property type="match status" value="1"/>
</dbReference>
<dbReference type="Pfam" id="PF07426">
    <property type="entry name" value="Dynactin_p22"/>
    <property type="match status" value="1"/>
</dbReference>
<evidence type="ECO:0000250" key="1">
    <source>
        <dbReference type="UniProtKB" id="F1SEC0"/>
    </source>
</evidence>
<evidence type="ECO:0000255" key="2"/>
<evidence type="ECO:0000269" key="3">
    <source>
    </source>
</evidence>
<evidence type="ECO:0000269" key="4">
    <source>
    </source>
</evidence>
<evidence type="ECO:0000303" key="5">
    <source>
    </source>
</evidence>
<evidence type="ECO:0000303" key="6">
    <source>
    </source>
</evidence>
<evidence type="ECO:0000305" key="7"/>
<evidence type="ECO:0000312" key="8">
    <source>
        <dbReference type="EMBL" id="AAC61280.1"/>
    </source>
</evidence>
<evidence type="ECO:0000312" key="9">
    <source>
        <dbReference type="EMBL" id="AAH03004.1"/>
    </source>
</evidence>
<evidence type="ECO:0000312" key="10">
    <source>
        <dbReference type="EMBL" id="AAI07698.1"/>
    </source>
</evidence>
<evidence type="ECO:0000312" key="11">
    <source>
        <dbReference type="EMBL" id="CAG46687.1"/>
    </source>
</evidence>
<evidence type="ECO:0000312" key="12">
    <source>
        <dbReference type="EMBL" id="CAI13143.1"/>
    </source>
</evidence>
<evidence type="ECO:0007744" key="13">
    <source>
    </source>
</evidence>
<sequence>MAGLTDLQRLQARVEELERWVYGPGGARGSRKVADGLVKVQVALGNISSKRERVKILYKKIEDLIKYLDPEYIDRIAIPDASKLQFILAEEQFILSQVALLEQVNALVPMLDSAHIKAVPEHAARLQRLAQIHIQQQDQCVEITEESKALLEEYNKTTMLLSKQFVQWDELLCQLEAATQVKPAEE</sequence>
<protein>
    <recommendedName>
        <fullName>Dynactin subunit 3</fullName>
    </recommendedName>
    <alternativeName>
        <fullName>Dynactin complex subunit 22 kDa subunit</fullName>
        <shortName>p22</shortName>
    </alternativeName>
</protein>
<accession>O75935</accession>
<accession>A6NII7</accession>
<accession>B2RBM5</accession>
<accession>Q5T1I5</accession>
<accession>Q5T1I7</accession>
<accession>Q5T8G3</accession>
<accession>Q9BPU8</accession>
<gene>
    <name evidence="11" type="primary">DCTN3</name>
    <name type="synonym">DCTN22</name>
</gene>
<feature type="initiator methionine" description="Removed" evidence="13">
    <location>
        <position position="1"/>
    </location>
</feature>
<feature type="chain" id="PRO_0000225603" description="Dynactin subunit 3">
    <location>
        <begin position="2"/>
        <end position="186"/>
    </location>
</feature>
<feature type="coiled-coil region" evidence="2">
    <location>
        <begin position="135"/>
        <end position="157"/>
    </location>
</feature>
<feature type="modified residue" description="N-acetylalanine" evidence="13">
    <location>
        <position position="2"/>
    </location>
</feature>
<feature type="splice variant" id="VSP_051961" description="In isoform 3." evidence="7">
    <location>
        <begin position="90"/>
        <end position="117"/>
    </location>
</feature>
<feature type="splice variant" id="VSP_051964" description="In isoform 2." evidence="5 6">
    <original>DQCVEITEESKALLEEYNKTTMLLSKQFVQWDELLCQLEAATQVKPAEE</original>
    <variation>APWGVGVRDEAGSLVEDVGFAQFLSVLHFGPTGPVCGNH</variation>
    <location>
        <begin position="138"/>
        <end position="186"/>
    </location>
</feature>